<keyword id="KW-0131">Cell cycle</keyword>
<keyword id="KW-0132">Cell division</keyword>
<keyword id="KW-0997">Cell inner membrane</keyword>
<keyword id="KW-1003">Cell membrane</keyword>
<keyword id="KW-0472">Membrane</keyword>
<keyword id="KW-0812">Transmembrane</keyword>
<keyword id="KW-1133">Transmembrane helix</keyword>
<dbReference type="EMBL" id="CP001113">
    <property type="protein sequence ID" value="ACF64296.1"/>
    <property type="molecule type" value="Genomic_DNA"/>
</dbReference>
<dbReference type="RefSeq" id="WP_000983128.1">
    <property type="nucleotide sequence ID" value="NZ_CCMR01000001.1"/>
</dbReference>
<dbReference type="SMR" id="B4SZU6"/>
<dbReference type="KEGG" id="see:SNSL254_A2621"/>
<dbReference type="HOGENOM" id="CLU_030174_1_0_6"/>
<dbReference type="Proteomes" id="UP000008824">
    <property type="component" value="Chromosome"/>
</dbReference>
<dbReference type="GO" id="GO:0032153">
    <property type="term" value="C:cell division site"/>
    <property type="evidence" value="ECO:0007669"/>
    <property type="project" value="UniProtKB-UniRule"/>
</dbReference>
<dbReference type="GO" id="GO:0005886">
    <property type="term" value="C:plasma membrane"/>
    <property type="evidence" value="ECO:0007669"/>
    <property type="project" value="UniProtKB-SubCell"/>
</dbReference>
<dbReference type="GO" id="GO:0000917">
    <property type="term" value="P:division septum assembly"/>
    <property type="evidence" value="ECO:0007669"/>
    <property type="project" value="TreeGrafter"/>
</dbReference>
<dbReference type="GO" id="GO:0043093">
    <property type="term" value="P:FtsZ-dependent cytokinesis"/>
    <property type="evidence" value="ECO:0007669"/>
    <property type="project" value="UniProtKB-UniRule"/>
</dbReference>
<dbReference type="CDD" id="cd00231">
    <property type="entry name" value="ZipA"/>
    <property type="match status" value="1"/>
</dbReference>
<dbReference type="FunFam" id="3.30.1400.10:FF:000001">
    <property type="entry name" value="Cell division protein ZipA"/>
    <property type="match status" value="1"/>
</dbReference>
<dbReference type="Gene3D" id="3.30.1400.10">
    <property type="entry name" value="ZipA, C-terminal FtsZ-binding domain"/>
    <property type="match status" value="1"/>
</dbReference>
<dbReference type="HAMAP" id="MF_00509">
    <property type="entry name" value="ZipA"/>
    <property type="match status" value="1"/>
</dbReference>
<dbReference type="InterPro" id="IPR011919">
    <property type="entry name" value="Cell_div_ZipA"/>
</dbReference>
<dbReference type="InterPro" id="IPR007449">
    <property type="entry name" value="ZipA_FtsZ-bd_C"/>
</dbReference>
<dbReference type="InterPro" id="IPR036765">
    <property type="entry name" value="ZipA_FtsZ-bd_C_sf"/>
</dbReference>
<dbReference type="NCBIfam" id="TIGR02205">
    <property type="entry name" value="septum_zipA"/>
    <property type="match status" value="1"/>
</dbReference>
<dbReference type="PANTHER" id="PTHR38685">
    <property type="entry name" value="CELL DIVISION PROTEIN ZIPA"/>
    <property type="match status" value="1"/>
</dbReference>
<dbReference type="PANTHER" id="PTHR38685:SF1">
    <property type="entry name" value="CELL DIVISION PROTEIN ZIPA"/>
    <property type="match status" value="1"/>
</dbReference>
<dbReference type="Pfam" id="PF04354">
    <property type="entry name" value="ZipA_C"/>
    <property type="match status" value="1"/>
</dbReference>
<dbReference type="SMART" id="SM00771">
    <property type="entry name" value="ZipA_C"/>
    <property type="match status" value="1"/>
</dbReference>
<dbReference type="SUPFAM" id="SSF64383">
    <property type="entry name" value="Cell-division protein ZipA, C-terminal domain"/>
    <property type="match status" value="1"/>
</dbReference>
<proteinExistence type="inferred from homology"/>
<organism>
    <name type="scientific">Salmonella newport (strain SL254)</name>
    <dbReference type="NCBI Taxonomy" id="423368"/>
    <lineage>
        <taxon>Bacteria</taxon>
        <taxon>Pseudomonadati</taxon>
        <taxon>Pseudomonadota</taxon>
        <taxon>Gammaproteobacteria</taxon>
        <taxon>Enterobacterales</taxon>
        <taxon>Enterobacteriaceae</taxon>
        <taxon>Salmonella</taxon>
    </lineage>
</organism>
<accession>B4SZU6</accession>
<evidence type="ECO:0000255" key="1">
    <source>
        <dbReference type="HAMAP-Rule" id="MF_00509"/>
    </source>
</evidence>
<evidence type="ECO:0000256" key="2">
    <source>
        <dbReference type="SAM" id="MobiDB-lite"/>
    </source>
</evidence>
<gene>
    <name evidence="1" type="primary">zipA</name>
    <name type="ordered locus">SNSL254_A2621</name>
</gene>
<feature type="chain" id="PRO_1000127229" description="Cell division protein ZipA">
    <location>
        <begin position="1"/>
        <end position="328"/>
    </location>
</feature>
<feature type="topological domain" description="Periplasmic" evidence="1">
    <location>
        <begin position="1"/>
        <end position="6"/>
    </location>
</feature>
<feature type="transmembrane region" description="Helical" evidence="1">
    <location>
        <begin position="7"/>
        <end position="27"/>
    </location>
</feature>
<feature type="topological domain" description="Cytoplasmic" evidence="1">
    <location>
        <begin position="28"/>
        <end position="328"/>
    </location>
</feature>
<feature type="region of interest" description="Disordered" evidence="2">
    <location>
        <begin position="42"/>
        <end position="174"/>
    </location>
</feature>
<feature type="compositionally biased region" description="Acidic residues" evidence="2">
    <location>
        <begin position="51"/>
        <end position="63"/>
    </location>
</feature>
<feature type="compositionally biased region" description="Low complexity" evidence="2">
    <location>
        <begin position="85"/>
        <end position="102"/>
    </location>
</feature>
<feature type="compositionally biased region" description="Low complexity" evidence="2">
    <location>
        <begin position="111"/>
        <end position="132"/>
    </location>
</feature>
<feature type="compositionally biased region" description="Pro residues" evidence="2">
    <location>
        <begin position="133"/>
        <end position="162"/>
    </location>
</feature>
<protein>
    <recommendedName>
        <fullName evidence="1">Cell division protein ZipA</fullName>
    </recommendedName>
</protein>
<sequence length="328" mass="36322">MMQDLRLILIIVGAIAIIALLVHGFWTSRKERSSMFRDRPLKRMKSKRDDDSYDDDVEEDEGVGEVRVHRVNHAPGQSQEHDAPRQSPQHQYQPPYASAQPRPAAPPQPQAPMQQPVQQPVQPAPQPQQVQPSAPPVQPPQQQPAPPSQAPQPVAQPAPPPSAQTFQPAEPVVEAEPVVEEATVVEKPQRKEAVIIMNVAAHHGSELNGEVLLNSIQQSGFKFGDMNIFHRHLSPDGSGPALFSLANMVNPGTFDPEMTDFTTPGVTIFMQVPSYGDALQNFKLMLQSAQHIADEVGGVVLDDQRRMMTPQKLREYQDRIREVMDANA</sequence>
<reference key="1">
    <citation type="journal article" date="2011" name="J. Bacteriol.">
        <title>Comparative genomics of 28 Salmonella enterica isolates: evidence for CRISPR-mediated adaptive sublineage evolution.</title>
        <authorList>
            <person name="Fricke W.F."/>
            <person name="Mammel M.K."/>
            <person name="McDermott P.F."/>
            <person name="Tartera C."/>
            <person name="White D.G."/>
            <person name="Leclerc J.E."/>
            <person name="Ravel J."/>
            <person name="Cebula T.A."/>
        </authorList>
    </citation>
    <scope>NUCLEOTIDE SEQUENCE [LARGE SCALE GENOMIC DNA]</scope>
    <source>
        <strain>SL254</strain>
    </source>
</reference>
<comment type="function">
    <text evidence="1">Essential cell division protein that stabilizes the FtsZ protofilaments by cross-linking them and that serves as a cytoplasmic membrane anchor for the Z ring. Also required for the recruitment to the septal ring of downstream cell division proteins.</text>
</comment>
<comment type="subunit">
    <text evidence="1">Interacts with FtsZ via their C-terminal domains.</text>
</comment>
<comment type="subcellular location">
    <subcellularLocation>
        <location evidence="1">Cell inner membrane</location>
        <topology evidence="1">Single-pass type I membrane protein</topology>
    </subcellularLocation>
    <text evidence="1">Localizes to the Z ring in an FtsZ-dependent manner.</text>
</comment>
<comment type="similarity">
    <text evidence="1">Belongs to the ZipA family.</text>
</comment>
<name>ZIPA_SALNS</name>